<feature type="chain" id="PRO_0000100908" description="Phosphoribosylaminoimidazole-succinocarboxamide synthase">
    <location>
        <begin position="1"/>
        <end position="237"/>
    </location>
</feature>
<reference key="1">
    <citation type="journal article" date="2002" name="Genome Res.">
        <title>The genome of Methanosarcina acetivorans reveals extensive metabolic and physiological diversity.</title>
        <authorList>
            <person name="Galagan J.E."/>
            <person name="Nusbaum C."/>
            <person name="Roy A."/>
            <person name="Endrizzi M.G."/>
            <person name="Macdonald P."/>
            <person name="FitzHugh W."/>
            <person name="Calvo S."/>
            <person name="Engels R."/>
            <person name="Smirnov S."/>
            <person name="Atnoor D."/>
            <person name="Brown A."/>
            <person name="Allen N."/>
            <person name="Naylor J."/>
            <person name="Stange-Thomann N."/>
            <person name="DeArellano K."/>
            <person name="Johnson R."/>
            <person name="Linton L."/>
            <person name="McEwan P."/>
            <person name="McKernan K."/>
            <person name="Talamas J."/>
            <person name="Tirrell A."/>
            <person name="Ye W."/>
            <person name="Zimmer A."/>
            <person name="Barber R.D."/>
            <person name="Cann I."/>
            <person name="Graham D.E."/>
            <person name="Grahame D.A."/>
            <person name="Guss A.M."/>
            <person name="Hedderich R."/>
            <person name="Ingram-Smith C."/>
            <person name="Kuettner H.C."/>
            <person name="Krzycki J.A."/>
            <person name="Leigh J.A."/>
            <person name="Li W."/>
            <person name="Liu J."/>
            <person name="Mukhopadhyay B."/>
            <person name="Reeve J.N."/>
            <person name="Smith K."/>
            <person name="Springer T.A."/>
            <person name="Umayam L.A."/>
            <person name="White O."/>
            <person name="White R.H."/>
            <person name="de Macario E.C."/>
            <person name="Ferry J.G."/>
            <person name="Jarrell K.F."/>
            <person name="Jing H."/>
            <person name="Macario A.J.L."/>
            <person name="Paulsen I.T."/>
            <person name="Pritchett M."/>
            <person name="Sowers K.R."/>
            <person name="Swanson R.V."/>
            <person name="Zinder S.H."/>
            <person name="Lander E."/>
            <person name="Metcalf W.W."/>
            <person name="Birren B."/>
        </authorList>
    </citation>
    <scope>NUCLEOTIDE SEQUENCE [LARGE SCALE GENOMIC DNA]</scope>
    <source>
        <strain>ATCC 35395 / DSM 2834 / JCM 12185 / C2A</strain>
    </source>
</reference>
<gene>
    <name evidence="1" type="primary">purC</name>
    <name type="ordered locus">MA_4063</name>
</gene>
<proteinExistence type="inferred from homology"/>
<comment type="catalytic activity">
    <reaction evidence="1">
        <text>5-amino-1-(5-phospho-D-ribosyl)imidazole-4-carboxylate + L-aspartate + ATP = (2S)-2-[5-amino-1-(5-phospho-beta-D-ribosyl)imidazole-4-carboxamido]succinate + ADP + phosphate + 2 H(+)</text>
        <dbReference type="Rhea" id="RHEA:22628"/>
        <dbReference type="ChEBI" id="CHEBI:15378"/>
        <dbReference type="ChEBI" id="CHEBI:29991"/>
        <dbReference type="ChEBI" id="CHEBI:30616"/>
        <dbReference type="ChEBI" id="CHEBI:43474"/>
        <dbReference type="ChEBI" id="CHEBI:58443"/>
        <dbReference type="ChEBI" id="CHEBI:77657"/>
        <dbReference type="ChEBI" id="CHEBI:456216"/>
        <dbReference type="EC" id="6.3.2.6"/>
    </reaction>
</comment>
<comment type="pathway">
    <text evidence="1">Purine metabolism; IMP biosynthesis via de novo pathway; 5-amino-1-(5-phospho-D-ribosyl)imidazole-4-carboxamide from 5-amino-1-(5-phospho-D-ribosyl)imidazole-4-carboxylate: step 1/2.</text>
</comment>
<comment type="similarity">
    <text evidence="1">Belongs to the SAICAR synthetase family.</text>
</comment>
<comment type="sequence caution" evidence="2">
    <conflict type="erroneous initiation">
        <sequence resource="EMBL-CDS" id="AAM07411"/>
    </conflict>
</comment>
<dbReference type="EC" id="6.3.2.6" evidence="1"/>
<dbReference type="EMBL" id="AE010299">
    <property type="protein sequence ID" value="AAM07411.1"/>
    <property type="status" value="ALT_INIT"/>
    <property type="molecule type" value="Genomic_DNA"/>
</dbReference>
<dbReference type="RefSeq" id="WP_048065889.1">
    <property type="nucleotide sequence ID" value="NC_003552.1"/>
</dbReference>
<dbReference type="SMR" id="Q8TIS9"/>
<dbReference type="FunCoup" id="Q8TIS9">
    <property type="interactions" value="127"/>
</dbReference>
<dbReference type="STRING" id="188937.MA_4063"/>
<dbReference type="EnsemblBacteria" id="AAM07411">
    <property type="protein sequence ID" value="AAM07411"/>
    <property type="gene ID" value="MA_4063"/>
</dbReference>
<dbReference type="GeneID" id="1475957"/>
<dbReference type="KEGG" id="mac:MA_4063"/>
<dbReference type="HOGENOM" id="CLU_061495_2_0_2"/>
<dbReference type="InParanoid" id="Q8TIS9"/>
<dbReference type="OrthoDB" id="10775at2157"/>
<dbReference type="PhylomeDB" id="Q8TIS9"/>
<dbReference type="UniPathway" id="UPA00074">
    <property type="reaction ID" value="UER00131"/>
</dbReference>
<dbReference type="Proteomes" id="UP000002487">
    <property type="component" value="Chromosome"/>
</dbReference>
<dbReference type="GO" id="GO:0005524">
    <property type="term" value="F:ATP binding"/>
    <property type="evidence" value="ECO:0007669"/>
    <property type="project" value="UniProtKB-KW"/>
</dbReference>
<dbReference type="GO" id="GO:0004639">
    <property type="term" value="F:phosphoribosylaminoimidazolesuccinocarboxamide synthase activity"/>
    <property type="evidence" value="ECO:0007669"/>
    <property type="project" value="UniProtKB-UniRule"/>
</dbReference>
<dbReference type="GO" id="GO:0006189">
    <property type="term" value="P:'de novo' IMP biosynthetic process"/>
    <property type="evidence" value="ECO:0007669"/>
    <property type="project" value="UniProtKB-UniRule"/>
</dbReference>
<dbReference type="GO" id="GO:0009236">
    <property type="term" value="P:cobalamin biosynthetic process"/>
    <property type="evidence" value="ECO:0007669"/>
    <property type="project" value="InterPro"/>
</dbReference>
<dbReference type="CDD" id="cd01415">
    <property type="entry name" value="SAICAR_synt_PurC"/>
    <property type="match status" value="1"/>
</dbReference>
<dbReference type="FunFam" id="3.30.200.20:FF:000086">
    <property type="entry name" value="Phosphoribosylaminoimidazole-succinocarboxamide synthase"/>
    <property type="match status" value="1"/>
</dbReference>
<dbReference type="FunFam" id="3.30.470.20:FF:000006">
    <property type="entry name" value="Phosphoribosylaminoimidazole-succinocarboxamide synthase"/>
    <property type="match status" value="1"/>
</dbReference>
<dbReference type="Gene3D" id="3.30.470.20">
    <property type="entry name" value="ATP-grasp fold, B domain"/>
    <property type="match status" value="1"/>
</dbReference>
<dbReference type="Gene3D" id="3.30.200.20">
    <property type="entry name" value="Phosphorylase Kinase, domain 1"/>
    <property type="match status" value="1"/>
</dbReference>
<dbReference type="HAMAP" id="MF_00137">
    <property type="entry name" value="SAICAR_synth"/>
    <property type="match status" value="1"/>
</dbReference>
<dbReference type="InterPro" id="IPR028923">
    <property type="entry name" value="SAICAR_synt/ADE2_N"/>
</dbReference>
<dbReference type="InterPro" id="IPR033934">
    <property type="entry name" value="SAICAR_synt_PurC"/>
</dbReference>
<dbReference type="InterPro" id="IPR001636">
    <property type="entry name" value="SAICAR_synth"/>
</dbReference>
<dbReference type="InterPro" id="IPR050089">
    <property type="entry name" value="SAICAR_synthetase"/>
</dbReference>
<dbReference type="InterPro" id="IPR018236">
    <property type="entry name" value="SAICAR_synthetase_CS"/>
</dbReference>
<dbReference type="NCBIfam" id="TIGR00081">
    <property type="entry name" value="purC"/>
    <property type="match status" value="1"/>
</dbReference>
<dbReference type="PANTHER" id="PTHR43599">
    <property type="entry name" value="MULTIFUNCTIONAL PROTEIN ADE2"/>
    <property type="match status" value="1"/>
</dbReference>
<dbReference type="PANTHER" id="PTHR43599:SF3">
    <property type="entry name" value="SI:DKEY-6E2.2"/>
    <property type="match status" value="1"/>
</dbReference>
<dbReference type="Pfam" id="PF01259">
    <property type="entry name" value="SAICAR_synt"/>
    <property type="match status" value="1"/>
</dbReference>
<dbReference type="SUPFAM" id="SSF56104">
    <property type="entry name" value="SAICAR synthase-like"/>
    <property type="match status" value="1"/>
</dbReference>
<dbReference type="PROSITE" id="PS01057">
    <property type="entry name" value="SAICAR_SYNTHETASE_1"/>
    <property type="match status" value="1"/>
</dbReference>
<dbReference type="PROSITE" id="PS01058">
    <property type="entry name" value="SAICAR_SYNTHETASE_2"/>
    <property type="match status" value="1"/>
</dbReference>
<protein>
    <recommendedName>
        <fullName evidence="1">Phosphoribosylaminoimidazole-succinocarboxamide synthase</fullName>
        <ecNumber evidence="1">6.3.2.6</ecNumber>
    </recommendedName>
    <alternativeName>
        <fullName evidence="1">SAICAR synthetase</fullName>
    </alternativeName>
</protein>
<organism>
    <name type="scientific">Methanosarcina acetivorans (strain ATCC 35395 / DSM 2834 / JCM 12185 / C2A)</name>
    <dbReference type="NCBI Taxonomy" id="188937"/>
    <lineage>
        <taxon>Archaea</taxon>
        <taxon>Methanobacteriati</taxon>
        <taxon>Methanobacteriota</taxon>
        <taxon>Stenosarchaea group</taxon>
        <taxon>Methanomicrobia</taxon>
        <taxon>Methanosarcinales</taxon>
        <taxon>Methanosarcinaceae</taxon>
        <taxon>Methanosarcina</taxon>
    </lineage>
</organism>
<sequence>MKREQLYSGKAKTIYATDNPDTLIAEFRNSLTAFNGEKKGEMEKKGYYNAQISKKIFEMLEASGIKTHFVSMLSDIEMLVKKVEIIKIEVIVRNIAAGSITKKYPMKEGTIFESPVLVFDFKSDEYGDPMLNDDIAVALGIATREELATLRKLALRINELLVPYLDEKGILLPDFKLEFGRRDGEIILSDEISCDTCRFWDKKTGQSMDKDVFRFDKGDISKAYEEVARRIVPEIFE</sequence>
<accession>Q8TIS9</accession>
<keyword id="KW-0067">ATP-binding</keyword>
<keyword id="KW-0436">Ligase</keyword>
<keyword id="KW-0547">Nucleotide-binding</keyword>
<keyword id="KW-0658">Purine biosynthesis</keyword>
<keyword id="KW-1185">Reference proteome</keyword>
<evidence type="ECO:0000255" key="1">
    <source>
        <dbReference type="HAMAP-Rule" id="MF_00137"/>
    </source>
</evidence>
<evidence type="ECO:0000305" key="2"/>
<name>PUR7_METAC</name>